<evidence type="ECO:0000255" key="1">
    <source>
        <dbReference type="HAMAP-Rule" id="MF_01139"/>
    </source>
</evidence>
<evidence type="ECO:0000305" key="2"/>
<protein>
    <recommendedName>
        <fullName evidence="1">Isoprenyl transferase</fullName>
        <ecNumber evidence="1">2.5.1.-</ecNumber>
    </recommendedName>
</protein>
<accession>Q9Z7Y7</accession>
<accession>Q9K2C7</accession>
<keyword id="KW-0460">Magnesium</keyword>
<keyword id="KW-0479">Metal-binding</keyword>
<keyword id="KW-0808">Transferase</keyword>
<comment type="function">
    <text evidence="1">Catalyzes the condensation of isopentenyl diphosphate (IPP) with allylic pyrophosphates generating different type of terpenoids.</text>
</comment>
<comment type="cofactor">
    <cofactor evidence="1">
        <name>Mg(2+)</name>
        <dbReference type="ChEBI" id="CHEBI:18420"/>
    </cofactor>
    <text evidence="1">Binds 2 magnesium ions per subunit.</text>
</comment>
<comment type="subunit">
    <text evidence="1">Homodimer.</text>
</comment>
<comment type="similarity">
    <text evidence="1">Belongs to the UPP synthase family.</text>
</comment>
<comment type="sequence caution" evidence="2">
    <conflict type="erroneous initiation">
        <sequence resource="EMBL-CDS" id="AAF38056"/>
    </conflict>
    <text>Extended N-terminus.</text>
</comment>
<sequence length="250" mass="28679">MSLATNNAESKFPSLQRLPNHVAIIMDGNRRWYKKHREECGHTHTSGHYYGAKVLPNILNAVLDLGIKVLTLYTFSTENFGRPKEEIQEIFNIFYTQLDKQLPYLMENEICLRCIGDLSKLPKGIQTKINHVSRMTASFSRLELVLAVNYGGKDELVRAFKKLHVDILNKKISSDDLSESLISSYLDTSGLTDPDLLIRTGGEMRVSNFLLWQIAYTELYITDTLWPDFTPQDLFEAINVYQQRSRRGGK</sequence>
<name>ISPT_CHLPN</name>
<reference key="1">
    <citation type="journal article" date="1999" name="Nat. Genet.">
        <title>Comparative genomes of Chlamydia pneumoniae and C. trachomatis.</title>
        <authorList>
            <person name="Kalman S."/>
            <person name="Mitchell W.P."/>
            <person name="Marathe R."/>
            <person name="Lammel C.J."/>
            <person name="Fan J."/>
            <person name="Hyman R.W."/>
            <person name="Olinger L."/>
            <person name="Grimwood J."/>
            <person name="Davis R.W."/>
            <person name="Stephens R.S."/>
        </authorList>
    </citation>
    <scope>NUCLEOTIDE SEQUENCE [LARGE SCALE GENOMIC DNA]</scope>
    <source>
        <strain>CWL029</strain>
    </source>
</reference>
<reference key="2">
    <citation type="journal article" date="2000" name="Nucleic Acids Res.">
        <title>Genome sequences of Chlamydia trachomatis MoPn and Chlamydia pneumoniae AR39.</title>
        <authorList>
            <person name="Read T.D."/>
            <person name="Brunham R.C."/>
            <person name="Shen C."/>
            <person name="Gill S.R."/>
            <person name="Heidelberg J.F."/>
            <person name="White O."/>
            <person name="Hickey E.K."/>
            <person name="Peterson J.D."/>
            <person name="Utterback T.R."/>
            <person name="Berry K.J."/>
            <person name="Bass S."/>
            <person name="Linher K.D."/>
            <person name="Weidman J.F."/>
            <person name="Khouri H.M."/>
            <person name="Craven B."/>
            <person name="Bowman C."/>
            <person name="Dodson R.J."/>
            <person name="Gwinn M.L."/>
            <person name="Nelson W.C."/>
            <person name="DeBoy R.T."/>
            <person name="Kolonay J.F."/>
            <person name="McClarty G."/>
            <person name="Salzberg S.L."/>
            <person name="Eisen J.A."/>
            <person name="Fraser C.M."/>
        </authorList>
    </citation>
    <scope>NUCLEOTIDE SEQUENCE [LARGE SCALE GENOMIC DNA]</scope>
    <source>
        <strain>AR39</strain>
    </source>
</reference>
<reference key="3">
    <citation type="journal article" date="2000" name="Nucleic Acids Res.">
        <title>Comparison of whole genome sequences of Chlamydia pneumoniae J138 from Japan and CWL029 from USA.</title>
        <authorList>
            <person name="Shirai M."/>
            <person name="Hirakawa H."/>
            <person name="Kimoto M."/>
            <person name="Tabuchi M."/>
            <person name="Kishi F."/>
            <person name="Ouchi K."/>
            <person name="Shiba T."/>
            <person name="Ishii K."/>
            <person name="Hattori M."/>
            <person name="Kuhara S."/>
            <person name="Nakazawa T."/>
        </authorList>
    </citation>
    <scope>NUCLEOTIDE SEQUENCE [LARGE SCALE GENOMIC DNA]</scope>
    <source>
        <strain>J138</strain>
    </source>
</reference>
<reference key="4">
    <citation type="submission" date="2002-05" db="EMBL/GenBank/DDBJ databases">
        <title>The genome sequence of Chlamydia pneumoniae TW183 and comparison with other Chlamydia strains based on whole genome sequence analysis.</title>
        <authorList>
            <person name="Geng M.M."/>
            <person name="Schuhmacher A."/>
            <person name="Muehldorfer I."/>
            <person name="Bensch K.W."/>
            <person name="Schaefer K.P."/>
            <person name="Schneider S."/>
            <person name="Pohl T."/>
            <person name="Essig A."/>
            <person name="Marre R."/>
            <person name="Melchers K."/>
        </authorList>
    </citation>
    <scope>NUCLEOTIDE SEQUENCE [LARGE SCALE GENOMIC DNA]</scope>
    <source>
        <strain>TW-183</strain>
    </source>
</reference>
<gene>
    <name evidence="1" type="primary">uppS</name>
    <name type="ordered locus">CPn_0566</name>
    <name type="ordered locus">CP_0183</name>
    <name type="ordered locus">CpB0588</name>
</gene>
<proteinExistence type="inferred from homology"/>
<organism>
    <name type="scientific">Chlamydia pneumoniae</name>
    <name type="common">Chlamydophila pneumoniae</name>
    <dbReference type="NCBI Taxonomy" id="83558"/>
    <lineage>
        <taxon>Bacteria</taxon>
        <taxon>Pseudomonadati</taxon>
        <taxon>Chlamydiota</taxon>
        <taxon>Chlamydiia</taxon>
        <taxon>Chlamydiales</taxon>
        <taxon>Chlamydiaceae</taxon>
        <taxon>Chlamydia/Chlamydophila group</taxon>
        <taxon>Chlamydia</taxon>
    </lineage>
</organism>
<dbReference type="EC" id="2.5.1.-" evidence="1"/>
<dbReference type="EMBL" id="AE001363">
    <property type="protein sequence ID" value="AAD18706.1"/>
    <property type="molecule type" value="Genomic_DNA"/>
</dbReference>
<dbReference type="EMBL" id="AE002161">
    <property type="protein sequence ID" value="AAF38056.1"/>
    <property type="status" value="ALT_INIT"/>
    <property type="molecule type" value="Genomic_DNA"/>
</dbReference>
<dbReference type="EMBL" id="BA000008">
    <property type="protein sequence ID" value="BAA98772.1"/>
    <property type="molecule type" value="Genomic_DNA"/>
</dbReference>
<dbReference type="EMBL" id="AE009440">
    <property type="protein sequence ID" value="AAP98517.1"/>
    <property type="molecule type" value="Genomic_DNA"/>
</dbReference>
<dbReference type="PIR" id="B86561">
    <property type="entry name" value="B86561"/>
</dbReference>
<dbReference type="PIR" id="G72062">
    <property type="entry name" value="G72062"/>
</dbReference>
<dbReference type="PIR" id="H81604">
    <property type="entry name" value="H81604"/>
</dbReference>
<dbReference type="RefSeq" id="NP_224762.1">
    <property type="nucleotide sequence ID" value="NC_000922.1"/>
</dbReference>
<dbReference type="RefSeq" id="WP_010883204.1">
    <property type="nucleotide sequence ID" value="NZ_LN847257.1"/>
</dbReference>
<dbReference type="SMR" id="Q9Z7Y7"/>
<dbReference type="STRING" id="406984.CPK_ORF01083"/>
<dbReference type="GeneID" id="45050610"/>
<dbReference type="KEGG" id="cpa:CP_0183"/>
<dbReference type="KEGG" id="cpj:yaeS"/>
<dbReference type="KEGG" id="cpn:CPn_0566"/>
<dbReference type="KEGG" id="cpt:CpB0588"/>
<dbReference type="PATRIC" id="fig|115713.3.peg.631"/>
<dbReference type="eggNOG" id="COG0020">
    <property type="taxonomic scope" value="Bacteria"/>
</dbReference>
<dbReference type="HOGENOM" id="CLU_038505_1_1_0"/>
<dbReference type="OrthoDB" id="4191603at2"/>
<dbReference type="Proteomes" id="UP000000583">
    <property type="component" value="Chromosome"/>
</dbReference>
<dbReference type="Proteomes" id="UP000000801">
    <property type="component" value="Chromosome"/>
</dbReference>
<dbReference type="GO" id="GO:0045547">
    <property type="term" value="F:ditrans,polycis-polyprenyl diphosphate synthase [(2E,6E)-farnesyl diphosphate specific] activity"/>
    <property type="evidence" value="ECO:0007669"/>
    <property type="project" value="TreeGrafter"/>
</dbReference>
<dbReference type="GO" id="GO:0000287">
    <property type="term" value="F:magnesium ion binding"/>
    <property type="evidence" value="ECO:0007669"/>
    <property type="project" value="UniProtKB-UniRule"/>
</dbReference>
<dbReference type="GO" id="GO:0016094">
    <property type="term" value="P:polyprenol biosynthetic process"/>
    <property type="evidence" value="ECO:0007669"/>
    <property type="project" value="TreeGrafter"/>
</dbReference>
<dbReference type="CDD" id="cd00475">
    <property type="entry name" value="Cis_IPPS"/>
    <property type="match status" value="1"/>
</dbReference>
<dbReference type="FunFam" id="3.40.1180.10:FF:000001">
    <property type="entry name" value="(2E,6E)-farnesyl-diphosphate-specific ditrans,polycis-undecaprenyl-diphosphate synthase"/>
    <property type="match status" value="1"/>
</dbReference>
<dbReference type="Gene3D" id="3.40.1180.10">
    <property type="entry name" value="Decaprenyl diphosphate synthase-like"/>
    <property type="match status" value="1"/>
</dbReference>
<dbReference type="HAMAP" id="MF_01139">
    <property type="entry name" value="ISPT"/>
    <property type="match status" value="1"/>
</dbReference>
<dbReference type="InterPro" id="IPR001441">
    <property type="entry name" value="UPP_synth-like"/>
</dbReference>
<dbReference type="InterPro" id="IPR018520">
    <property type="entry name" value="UPP_synth-like_CS"/>
</dbReference>
<dbReference type="InterPro" id="IPR036424">
    <property type="entry name" value="UPP_synth-like_sf"/>
</dbReference>
<dbReference type="NCBIfam" id="NF011413">
    <property type="entry name" value="PRK14840.1"/>
    <property type="match status" value="1"/>
</dbReference>
<dbReference type="NCBIfam" id="TIGR00055">
    <property type="entry name" value="uppS"/>
    <property type="match status" value="1"/>
</dbReference>
<dbReference type="PANTHER" id="PTHR10291:SF0">
    <property type="entry name" value="DEHYDRODOLICHYL DIPHOSPHATE SYNTHASE 2"/>
    <property type="match status" value="1"/>
</dbReference>
<dbReference type="PANTHER" id="PTHR10291">
    <property type="entry name" value="DEHYDRODOLICHYL DIPHOSPHATE SYNTHASE FAMILY MEMBER"/>
    <property type="match status" value="1"/>
</dbReference>
<dbReference type="Pfam" id="PF01255">
    <property type="entry name" value="Prenyltransf"/>
    <property type="match status" value="1"/>
</dbReference>
<dbReference type="SUPFAM" id="SSF64005">
    <property type="entry name" value="Undecaprenyl diphosphate synthase"/>
    <property type="match status" value="1"/>
</dbReference>
<dbReference type="PROSITE" id="PS01066">
    <property type="entry name" value="UPP_SYNTHASE"/>
    <property type="match status" value="1"/>
</dbReference>
<feature type="chain" id="PRO_0000123594" description="Isoprenyl transferase">
    <location>
        <begin position="1"/>
        <end position="250"/>
    </location>
</feature>
<feature type="active site" evidence="1">
    <location>
        <position position="27"/>
    </location>
</feature>
<feature type="active site" description="Proton acceptor" evidence="1">
    <location>
        <position position="79"/>
    </location>
</feature>
<feature type="binding site" evidence="1">
    <location>
        <position position="27"/>
    </location>
    <ligand>
        <name>Mg(2+)</name>
        <dbReference type="ChEBI" id="CHEBI:18420"/>
    </ligand>
</feature>
<feature type="binding site" evidence="1">
    <location>
        <begin position="28"/>
        <end position="31"/>
    </location>
    <ligand>
        <name>substrate</name>
    </ligand>
</feature>
<feature type="binding site" evidence="1">
    <location>
        <position position="32"/>
    </location>
    <ligand>
        <name>substrate</name>
    </ligand>
</feature>
<feature type="binding site" evidence="1">
    <location>
        <position position="48"/>
    </location>
    <ligand>
        <name>substrate</name>
    </ligand>
</feature>
<feature type="binding site" evidence="1">
    <location>
        <begin position="76"/>
        <end position="78"/>
    </location>
    <ligand>
        <name>substrate</name>
    </ligand>
</feature>
<feature type="binding site" evidence="1">
    <location>
        <position position="80"/>
    </location>
    <ligand>
        <name>substrate</name>
    </ligand>
</feature>
<feature type="binding site" evidence="1">
    <location>
        <position position="82"/>
    </location>
    <ligand>
        <name>substrate</name>
    </ligand>
</feature>
<feature type="binding site" evidence="1">
    <location>
        <position position="199"/>
    </location>
    <ligand>
        <name>substrate</name>
    </ligand>
</feature>
<feature type="binding site" evidence="1">
    <location>
        <begin position="205"/>
        <end position="207"/>
    </location>
    <ligand>
        <name>substrate</name>
    </ligand>
</feature>
<feature type="binding site" evidence="1">
    <location>
        <position position="218"/>
    </location>
    <ligand>
        <name>Mg(2+)</name>
        <dbReference type="ChEBI" id="CHEBI:18420"/>
    </ligand>
</feature>